<feature type="signal peptide" evidence="1">
    <location>
        <begin position="1"/>
        <end position="17"/>
    </location>
</feature>
<feature type="chain" id="PRO_0000033057" description="Somatotropin">
    <location>
        <begin position="18"/>
        <end position="204"/>
    </location>
</feature>
<feature type="binding site" evidence="1">
    <location>
        <position position="36"/>
    </location>
    <ligand>
        <name>Zn(2+)</name>
        <dbReference type="ChEBI" id="CHEBI:29105"/>
    </ligand>
</feature>
<feature type="binding site" evidence="1">
    <location>
        <position position="186"/>
    </location>
    <ligand>
        <name>Zn(2+)</name>
        <dbReference type="ChEBI" id="CHEBI:29105"/>
    </ligand>
</feature>
<feature type="modified residue" description="Pyrrolidone carboxylic acid" evidence="1">
    <location>
        <position position="18"/>
    </location>
</feature>
<feature type="disulfide bond" evidence="1">
    <location>
        <begin position="69"/>
        <end position="177"/>
    </location>
</feature>
<feature type="disulfide bond" evidence="1">
    <location>
        <begin position="194"/>
        <end position="202"/>
    </location>
</feature>
<feature type="sequence conflict" description="In Ref. 2; AAA03329." evidence="2" ref="2">
    <original>E</original>
    <variation>D</variation>
    <location>
        <position position="56"/>
    </location>
</feature>
<feature type="sequence conflict" description="In Ref. 1; AAB19750." evidence="2" ref="1">
    <original>R</original>
    <variation>P</variation>
    <location>
        <position position="58"/>
    </location>
</feature>
<feature type="sequence conflict" description="In Ref. 1; AAB19750." evidence="2" ref="1">
    <original>S</original>
    <variation>C</variation>
    <location>
        <position position="71"/>
    </location>
</feature>
<feature type="sequence conflict" description="In Ref. 1; AAB19750." evidence="2" ref="1">
    <original>S</original>
    <variation>R</variation>
    <location>
        <position position="147"/>
    </location>
</feature>
<protein>
    <recommendedName>
        <fullName>Somatotropin</fullName>
    </recommendedName>
    <alternativeName>
        <fullName>Growth hormone</fullName>
    </alternativeName>
</protein>
<dbReference type="EMBL" id="S54890">
    <property type="protein sequence ID" value="AAB19750.2"/>
    <property type="molecule type" value="mRNA"/>
</dbReference>
<dbReference type="EMBL" id="U01301">
    <property type="protein sequence ID" value="AAA03329.1"/>
    <property type="molecule type" value="mRNA"/>
</dbReference>
<dbReference type="EMBL" id="U48221">
    <property type="protein sequence ID" value="AAA90968.1"/>
    <property type="molecule type" value="Genomic_DNA"/>
</dbReference>
<dbReference type="EMBL" id="AF195646">
    <property type="protein sequence ID" value="AAG28461.1"/>
    <property type="molecule type" value="Genomic_DNA"/>
</dbReference>
<dbReference type="PIR" id="JH0577">
    <property type="entry name" value="JH0577"/>
</dbReference>
<dbReference type="SMR" id="P29971"/>
<dbReference type="FunCoup" id="P29971">
    <property type="interactions" value="1912"/>
</dbReference>
<dbReference type="Ensembl" id="ENSSAUT00010041396.1">
    <property type="protein sequence ID" value="ENSSAUP00010039266.1"/>
    <property type="gene ID" value="ENSSAUG00010016543.1"/>
</dbReference>
<dbReference type="GeneTree" id="ENSGT00950000182818"/>
<dbReference type="InParanoid" id="P29971"/>
<dbReference type="OMA" id="VAYCYSE"/>
<dbReference type="OrthoDB" id="9925773at2759"/>
<dbReference type="Proteomes" id="UP000472265">
    <property type="component" value="Chromosome 23"/>
</dbReference>
<dbReference type="GO" id="GO:0005615">
    <property type="term" value="C:extracellular space"/>
    <property type="evidence" value="ECO:0007669"/>
    <property type="project" value="InterPro"/>
</dbReference>
<dbReference type="GO" id="GO:0070186">
    <property type="term" value="F:growth hormone activity"/>
    <property type="evidence" value="ECO:0007669"/>
    <property type="project" value="TreeGrafter"/>
</dbReference>
<dbReference type="GO" id="GO:0005131">
    <property type="term" value="F:growth hormone receptor binding"/>
    <property type="evidence" value="ECO:0007669"/>
    <property type="project" value="InterPro"/>
</dbReference>
<dbReference type="GO" id="GO:0046872">
    <property type="term" value="F:metal ion binding"/>
    <property type="evidence" value="ECO:0007669"/>
    <property type="project" value="UniProtKB-KW"/>
</dbReference>
<dbReference type="GO" id="GO:0048513">
    <property type="term" value="P:animal organ development"/>
    <property type="evidence" value="ECO:0007669"/>
    <property type="project" value="TreeGrafter"/>
</dbReference>
<dbReference type="GO" id="GO:0060396">
    <property type="term" value="P:growth hormone receptor signaling pathway"/>
    <property type="evidence" value="ECO:0007669"/>
    <property type="project" value="TreeGrafter"/>
</dbReference>
<dbReference type="GO" id="GO:0045927">
    <property type="term" value="P:positive regulation of growth"/>
    <property type="evidence" value="ECO:0007669"/>
    <property type="project" value="TreeGrafter"/>
</dbReference>
<dbReference type="GO" id="GO:0046427">
    <property type="term" value="P:positive regulation of receptor signaling pathway via JAK-STAT"/>
    <property type="evidence" value="ECO:0007669"/>
    <property type="project" value="TreeGrafter"/>
</dbReference>
<dbReference type="GO" id="GO:0031667">
    <property type="term" value="P:response to nutrient levels"/>
    <property type="evidence" value="ECO:0007669"/>
    <property type="project" value="TreeGrafter"/>
</dbReference>
<dbReference type="CDD" id="cd10285">
    <property type="entry name" value="somatotropin_like"/>
    <property type="match status" value="1"/>
</dbReference>
<dbReference type="FunFam" id="1.20.1250.10:FF:000009">
    <property type="entry name" value="Growth hormone"/>
    <property type="match status" value="1"/>
</dbReference>
<dbReference type="Gene3D" id="1.20.1250.10">
    <property type="match status" value="1"/>
</dbReference>
<dbReference type="InterPro" id="IPR009079">
    <property type="entry name" value="4_helix_cytokine-like_core"/>
</dbReference>
<dbReference type="InterPro" id="IPR034975">
    <property type="entry name" value="Somatotropin"/>
</dbReference>
<dbReference type="InterPro" id="IPR001400">
    <property type="entry name" value="Somatotropin/Prolactin"/>
</dbReference>
<dbReference type="InterPro" id="IPR018116">
    <property type="entry name" value="Somatotropin_CS"/>
</dbReference>
<dbReference type="PANTHER" id="PTHR11417:SF2">
    <property type="entry name" value="SOMATOTROPIN"/>
    <property type="match status" value="1"/>
</dbReference>
<dbReference type="PANTHER" id="PTHR11417">
    <property type="entry name" value="SOMATOTROPIN,PROLACTIN"/>
    <property type="match status" value="1"/>
</dbReference>
<dbReference type="Pfam" id="PF00103">
    <property type="entry name" value="Hormone_1"/>
    <property type="match status" value="1"/>
</dbReference>
<dbReference type="PRINTS" id="PR00836">
    <property type="entry name" value="SOMATOTROPIN"/>
</dbReference>
<dbReference type="SUPFAM" id="SSF47266">
    <property type="entry name" value="4-helical cytokines"/>
    <property type="match status" value="1"/>
</dbReference>
<dbReference type="PROSITE" id="PS00266">
    <property type="entry name" value="SOMATOTROPIN_1"/>
    <property type="match status" value="1"/>
</dbReference>
<dbReference type="PROSITE" id="PS00338">
    <property type="entry name" value="SOMATOTROPIN_2"/>
    <property type="match status" value="1"/>
</dbReference>
<evidence type="ECO:0000250" key="1"/>
<evidence type="ECO:0000305" key="2"/>
<reference key="1">
    <citation type="journal article" date="1991" name="Gene">
        <title>Cloning and sequencing of the gilthead seabream (Sparus aurata) growth hormone-encoding cDNA.</title>
        <authorList>
            <person name="Funkenstein B."/>
            <person name="Chen T.T."/>
            <person name="Powers D.A."/>
            <person name="Cavari B."/>
        </authorList>
    </citation>
    <scope>NUCLEOTIDE SEQUENCE [MRNA]</scope>
    <source>
        <tissue>Pituitary</tissue>
    </source>
</reference>
<reference key="2">
    <citation type="submission" date="1993-09" db="EMBL/GenBank/DDBJ databases">
        <authorList>
            <person name="Martinez-Barbera J.-P."/>
        </authorList>
    </citation>
    <scope>NUCLEOTIDE SEQUENCE</scope>
</reference>
<reference key="3">
    <citation type="submission" date="1996-01" db="EMBL/GenBank/DDBJ databases">
        <authorList>
            <person name="Rodriguez R.B."/>
            <person name="Sanchez-Ayuso M."/>
            <person name="Parrilla R."/>
        </authorList>
    </citation>
    <scope>NUCLEOTIDE SEQUENCE</scope>
</reference>
<reference key="4">
    <citation type="journal article" date="2000" name="Genome">
        <title>Genomic structure and sequence of the gilthead seabream (Sparus aurata) growth hormone-encoding gene: identification of minisatellite polymorphism in intron I.</title>
        <authorList>
            <person name="Almuly R."/>
            <person name="Cavari B."/>
            <person name="Ferstman H."/>
            <person name="Kolodny O."/>
            <person name="Funkenstein B."/>
        </authorList>
    </citation>
    <scope>NUCLEOTIDE SEQUENCE [GENOMIC DNA]</scope>
</reference>
<sequence>MDRVVLMLSVMSLGVSSQPITDGQRLFSIAVSRVQHLHLLAQRLFSDFESSLQTEEQRQLNKIFLQDFCNSDYIISPIDKHETQRSSVLKLLSISYRLVESWEFPSRSLSGGSAPRNQISPKLSELKTGIHLLIRANEDGAEIFPDSSALQLAPYGNYYQSLGTDESLRRTYELLACFKKDMHKVETYLTVAKCRLSPEANCTL</sequence>
<comment type="function">
    <text>Growth hormone plays an important role in growth control and is involved in the regulation of several anabolic processes. Implicated as an osmoregulatory substance important for seawater adaptation.</text>
</comment>
<comment type="subcellular location">
    <subcellularLocation>
        <location>Secreted</location>
    </subcellularLocation>
</comment>
<comment type="similarity">
    <text evidence="2">Belongs to the somatotropin/prolactin family.</text>
</comment>
<keyword id="KW-1015">Disulfide bond</keyword>
<keyword id="KW-0372">Hormone</keyword>
<keyword id="KW-0479">Metal-binding</keyword>
<keyword id="KW-0873">Pyrrolidone carboxylic acid</keyword>
<keyword id="KW-1185">Reference proteome</keyword>
<keyword id="KW-0964">Secreted</keyword>
<keyword id="KW-0732">Signal</keyword>
<keyword id="KW-0862">Zinc</keyword>
<name>SOMA_SPAAU</name>
<organism>
    <name type="scientific">Sparus aurata</name>
    <name type="common">Gilthead sea bream</name>
    <dbReference type="NCBI Taxonomy" id="8175"/>
    <lineage>
        <taxon>Eukaryota</taxon>
        <taxon>Metazoa</taxon>
        <taxon>Chordata</taxon>
        <taxon>Craniata</taxon>
        <taxon>Vertebrata</taxon>
        <taxon>Euteleostomi</taxon>
        <taxon>Actinopterygii</taxon>
        <taxon>Neopterygii</taxon>
        <taxon>Teleostei</taxon>
        <taxon>Neoteleostei</taxon>
        <taxon>Acanthomorphata</taxon>
        <taxon>Eupercaria</taxon>
        <taxon>Spariformes</taxon>
        <taxon>Sparidae</taxon>
        <taxon>Sparus</taxon>
    </lineage>
</organism>
<proteinExistence type="evidence at transcript level"/>
<gene>
    <name type="primary">gh</name>
</gene>
<accession>P29971</accession>
<accession>Q90Y60</accession>
<accession>Q91440</accession>